<reference key="1">
    <citation type="submission" date="2006-06" db="EMBL/GenBank/DDBJ databases">
        <title>Complete sequence of chromosome of Mesorhizobium sp. BNC1.</title>
        <authorList>
            <consortium name="US DOE Joint Genome Institute"/>
            <person name="Copeland A."/>
            <person name="Lucas S."/>
            <person name="Lapidus A."/>
            <person name="Barry K."/>
            <person name="Detter J.C."/>
            <person name="Glavina del Rio T."/>
            <person name="Hammon N."/>
            <person name="Israni S."/>
            <person name="Dalin E."/>
            <person name="Tice H."/>
            <person name="Pitluck S."/>
            <person name="Chertkov O."/>
            <person name="Brettin T."/>
            <person name="Bruce D."/>
            <person name="Han C."/>
            <person name="Tapia R."/>
            <person name="Gilna P."/>
            <person name="Schmutz J."/>
            <person name="Larimer F."/>
            <person name="Land M."/>
            <person name="Hauser L."/>
            <person name="Kyrpides N."/>
            <person name="Mikhailova N."/>
            <person name="Richardson P."/>
        </authorList>
    </citation>
    <scope>NUCLEOTIDE SEQUENCE [LARGE SCALE GENOMIC DNA]</scope>
    <source>
        <strain>BNC1</strain>
    </source>
</reference>
<accession>Q11GR7</accession>
<evidence type="ECO:0000255" key="1">
    <source>
        <dbReference type="HAMAP-Rule" id="MF_01007"/>
    </source>
</evidence>
<evidence type="ECO:0000256" key="2">
    <source>
        <dbReference type="SAM" id="MobiDB-lite"/>
    </source>
</evidence>
<comment type="function">
    <text evidence="1">Specifically methylates the N4 position of cytidine in position 1402 (C1402) of 16S rRNA.</text>
</comment>
<comment type="catalytic activity">
    <reaction evidence="1">
        <text>cytidine(1402) in 16S rRNA + S-adenosyl-L-methionine = N(4)-methylcytidine(1402) in 16S rRNA + S-adenosyl-L-homocysteine + H(+)</text>
        <dbReference type="Rhea" id="RHEA:42928"/>
        <dbReference type="Rhea" id="RHEA-COMP:10286"/>
        <dbReference type="Rhea" id="RHEA-COMP:10287"/>
        <dbReference type="ChEBI" id="CHEBI:15378"/>
        <dbReference type="ChEBI" id="CHEBI:57856"/>
        <dbReference type="ChEBI" id="CHEBI:59789"/>
        <dbReference type="ChEBI" id="CHEBI:74506"/>
        <dbReference type="ChEBI" id="CHEBI:82748"/>
        <dbReference type="EC" id="2.1.1.199"/>
    </reaction>
</comment>
<comment type="subcellular location">
    <subcellularLocation>
        <location evidence="1">Cytoplasm</location>
    </subcellularLocation>
</comment>
<comment type="similarity">
    <text evidence="1">Belongs to the methyltransferase superfamily. RsmH family.</text>
</comment>
<protein>
    <recommendedName>
        <fullName evidence="1">Ribosomal RNA small subunit methyltransferase H</fullName>
        <ecNumber evidence="1">2.1.1.199</ecNumber>
    </recommendedName>
    <alternativeName>
        <fullName evidence="1">16S rRNA m(4)C1402 methyltransferase</fullName>
    </alternativeName>
    <alternativeName>
        <fullName evidence="1">rRNA (cytosine-N(4)-)-methyltransferase RsmH</fullName>
    </alternativeName>
</protein>
<organism>
    <name type="scientific">Chelativorans sp. (strain BNC1)</name>
    <dbReference type="NCBI Taxonomy" id="266779"/>
    <lineage>
        <taxon>Bacteria</taxon>
        <taxon>Pseudomonadati</taxon>
        <taxon>Pseudomonadota</taxon>
        <taxon>Alphaproteobacteria</taxon>
        <taxon>Hyphomicrobiales</taxon>
        <taxon>Phyllobacteriaceae</taxon>
        <taxon>Chelativorans</taxon>
    </lineage>
</organism>
<sequence length="339" mass="36538">MTGSGGYGAGAVPAPHLPVLLAEVLEALEPARGKLILDGTFGAGGYTRALLEAGADVIAIDQDPDAIAGGKPLAQEFAPRLRLERGRFSEMEEIAGEMLDGIVLDVGVSSMQLDQAERGFSFRREGPLDMRMGQEGTSAADVVNKFKAGDLARIFGLLGEERHAGRIARAIEKGRAEKPFRTTGDLAELVERVIGHRPTDKIHPATRVFQGLRIFVNDELGELARALFAAERLLKPGGILAVVTFHSLEDRIVKRFLQARSGPQAQSRHLPEKAAAQPVFEKPMKPVSPGEAETAENPRARSAHLRAARRTAHPAGVQDFKLFGVPALFVTEQLGEKAR</sequence>
<gene>
    <name evidence="1" type="primary">rsmH</name>
    <name type="synonym">mraW</name>
    <name type="ordered locus">Meso_2015</name>
</gene>
<keyword id="KW-0963">Cytoplasm</keyword>
<keyword id="KW-0489">Methyltransferase</keyword>
<keyword id="KW-0698">rRNA processing</keyword>
<keyword id="KW-0949">S-adenosyl-L-methionine</keyword>
<keyword id="KW-0808">Transferase</keyword>
<name>RSMH_CHESB</name>
<dbReference type="EC" id="2.1.1.199" evidence="1"/>
<dbReference type="EMBL" id="CP000390">
    <property type="protein sequence ID" value="ABG63408.1"/>
    <property type="molecule type" value="Genomic_DNA"/>
</dbReference>
<dbReference type="SMR" id="Q11GR7"/>
<dbReference type="STRING" id="266779.Meso_2015"/>
<dbReference type="KEGG" id="mes:Meso_2015"/>
<dbReference type="eggNOG" id="COG0275">
    <property type="taxonomic scope" value="Bacteria"/>
</dbReference>
<dbReference type="HOGENOM" id="CLU_038422_1_1_5"/>
<dbReference type="OrthoDB" id="9806637at2"/>
<dbReference type="GO" id="GO:0005737">
    <property type="term" value="C:cytoplasm"/>
    <property type="evidence" value="ECO:0007669"/>
    <property type="project" value="UniProtKB-SubCell"/>
</dbReference>
<dbReference type="GO" id="GO:0071424">
    <property type="term" value="F:rRNA (cytosine-N4-)-methyltransferase activity"/>
    <property type="evidence" value="ECO:0007669"/>
    <property type="project" value="UniProtKB-UniRule"/>
</dbReference>
<dbReference type="GO" id="GO:0070475">
    <property type="term" value="P:rRNA base methylation"/>
    <property type="evidence" value="ECO:0007669"/>
    <property type="project" value="UniProtKB-UniRule"/>
</dbReference>
<dbReference type="CDD" id="cd02440">
    <property type="entry name" value="AdoMet_MTases"/>
    <property type="match status" value="1"/>
</dbReference>
<dbReference type="Gene3D" id="1.10.150.170">
    <property type="entry name" value="Putative methyltransferase TM0872, insert domain"/>
    <property type="match status" value="1"/>
</dbReference>
<dbReference type="Gene3D" id="3.40.50.150">
    <property type="entry name" value="Vaccinia Virus protein VP39"/>
    <property type="match status" value="1"/>
</dbReference>
<dbReference type="HAMAP" id="MF_01007">
    <property type="entry name" value="16SrRNA_methyltr_H"/>
    <property type="match status" value="1"/>
</dbReference>
<dbReference type="InterPro" id="IPR002903">
    <property type="entry name" value="RsmH"/>
</dbReference>
<dbReference type="InterPro" id="IPR023397">
    <property type="entry name" value="SAM-dep_MeTrfase_MraW_recog"/>
</dbReference>
<dbReference type="InterPro" id="IPR029063">
    <property type="entry name" value="SAM-dependent_MTases_sf"/>
</dbReference>
<dbReference type="NCBIfam" id="TIGR00006">
    <property type="entry name" value="16S rRNA (cytosine(1402)-N(4))-methyltransferase RsmH"/>
    <property type="match status" value="1"/>
</dbReference>
<dbReference type="PANTHER" id="PTHR11265:SF0">
    <property type="entry name" value="12S RRNA N4-METHYLCYTIDINE METHYLTRANSFERASE"/>
    <property type="match status" value="1"/>
</dbReference>
<dbReference type="PANTHER" id="PTHR11265">
    <property type="entry name" value="S-ADENOSYL-METHYLTRANSFERASE MRAW"/>
    <property type="match status" value="1"/>
</dbReference>
<dbReference type="Pfam" id="PF01795">
    <property type="entry name" value="Methyltransf_5"/>
    <property type="match status" value="1"/>
</dbReference>
<dbReference type="PIRSF" id="PIRSF004486">
    <property type="entry name" value="MraW"/>
    <property type="match status" value="1"/>
</dbReference>
<dbReference type="SUPFAM" id="SSF81799">
    <property type="entry name" value="Putative methyltransferase TM0872, insert domain"/>
    <property type="match status" value="1"/>
</dbReference>
<dbReference type="SUPFAM" id="SSF53335">
    <property type="entry name" value="S-adenosyl-L-methionine-dependent methyltransferases"/>
    <property type="match status" value="1"/>
</dbReference>
<proteinExistence type="inferred from homology"/>
<feature type="chain" id="PRO_0000318876" description="Ribosomal RNA small subunit methyltransferase H">
    <location>
        <begin position="1"/>
        <end position="339"/>
    </location>
</feature>
<feature type="region of interest" description="Disordered" evidence="2">
    <location>
        <begin position="263"/>
        <end position="312"/>
    </location>
</feature>
<feature type="compositionally biased region" description="Basic residues" evidence="2">
    <location>
        <begin position="301"/>
        <end position="312"/>
    </location>
</feature>
<feature type="binding site" evidence="1">
    <location>
        <begin position="44"/>
        <end position="46"/>
    </location>
    <ligand>
        <name>S-adenosyl-L-methionine</name>
        <dbReference type="ChEBI" id="CHEBI:59789"/>
    </ligand>
</feature>
<feature type="binding site" evidence="1">
    <location>
        <position position="61"/>
    </location>
    <ligand>
        <name>S-adenosyl-L-methionine</name>
        <dbReference type="ChEBI" id="CHEBI:59789"/>
    </ligand>
</feature>
<feature type="binding site" evidence="1">
    <location>
        <position position="88"/>
    </location>
    <ligand>
        <name>S-adenosyl-L-methionine</name>
        <dbReference type="ChEBI" id="CHEBI:59789"/>
    </ligand>
</feature>
<feature type="binding site" evidence="1">
    <location>
        <position position="105"/>
    </location>
    <ligand>
        <name>S-adenosyl-L-methionine</name>
        <dbReference type="ChEBI" id="CHEBI:59789"/>
    </ligand>
</feature>
<feature type="binding site" evidence="1">
    <location>
        <position position="112"/>
    </location>
    <ligand>
        <name>S-adenosyl-L-methionine</name>
        <dbReference type="ChEBI" id="CHEBI:59789"/>
    </ligand>
</feature>